<name>RL36_GEOSE</name>
<feature type="chain" id="PRO_0000126148" description="Large ribosomal subunit protein bL36">
    <location>
        <begin position="1"/>
        <end position="37"/>
    </location>
</feature>
<comment type="similarity">
    <text evidence="1">Belongs to the bacterial ribosomal protein bL36 family.</text>
</comment>
<protein>
    <recommendedName>
        <fullName evidence="1">Large ribosomal subunit protein bL36</fullName>
    </recommendedName>
    <alternativeName>
        <fullName>50S ribosomal protein L36</fullName>
    </alternativeName>
    <alternativeName>
        <fullName>BL38</fullName>
    </alternativeName>
    <alternativeName>
        <fullName>Ribosomal protein B</fullName>
    </alternativeName>
    <alternativeName>
        <fullName>Ribosomal protein II</fullName>
    </alternativeName>
</protein>
<proteinExistence type="evidence at protein level"/>
<accession>P07841</accession>
<gene>
    <name type="primary">rpmJ</name>
</gene>
<reference key="1">
    <citation type="journal article" date="1984" name="FEBS Lett.">
        <title>The amino acid sequence of two small ribosomal proteins from Bacillus stearothermophilus.</title>
        <authorList>
            <person name="Tanaka I."/>
            <person name="Kimura M."/>
            <person name="Kimura J."/>
            <person name="Dijk J."/>
        </authorList>
    </citation>
    <scope>PROTEIN SEQUENCE</scope>
</reference>
<reference key="2">
    <citation type="journal article" date="1995" name="EMBO J.">
        <title>Protein-rRNA binding features and their structural and functional implications in ribosomes as determined by cross-linking studies.</title>
        <authorList>
            <person name="Urlaub H."/>
            <person name="Kruft V."/>
            <person name="Bischof O."/>
            <person name="Mueller E.-C."/>
            <person name="Wittmann-Liebold B."/>
        </authorList>
    </citation>
    <scope>PROTEIN SEQUENCE OF 14-31</scope>
    <scope>CROSS-LINKING TO RRNA</scope>
    <source>
        <strain>799</strain>
    </source>
</reference>
<dbReference type="PIR" id="S08566">
    <property type="entry name" value="R5BS36"/>
</dbReference>
<dbReference type="RefSeq" id="WP_003247619.1">
    <property type="nucleotide sequence ID" value="NZ_RCTK01000011.1"/>
</dbReference>
<dbReference type="SMR" id="P07841"/>
<dbReference type="GeneID" id="94898246"/>
<dbReference type="OrthoDB" id="9802520at2"/>
<dbReference type="GO" id="GO:0005737">
    <property type="term" value="C:cytoplasm"/>
    <property type="evidence" value="ECO:0007669"/>
    <property type="project" value="UniProtKB-ARBA"/>
</dbReference>
<dbReference type="GO" id="GO:1990904">
    <property type="term" value="C:ribonucleoprotein complex"/>
    <property type="evidence" value="ECO:0007669"/>
    <property type="project" value="UniProtKB-KW"/>
</dbReference>
<dbReference type="GO" id="GO:0005840">
    <property type="term" value="C:ribosome"/>
    <property type="evidence" value="ECO:0007669"/>
    <property type="project" value="UniProtKB-KW"/>
</dbReference>
<dbReference type="GO" id="GO:0003735">
    <property type="term" value="F:structural constituent of ribosome"/>
    <property type="evidence" value="ECO:0007669"/>
    <property type="project" value="InterPro"/>
</dbReference>
<dbReference type="GO" id="GO:0006412">
    <property type="term" value="P:translation"/>
    <property type="evidence" value="ECO:0007669"/>
    <property type="project" value="UniProtKB-UniRule"/>
</dbReference>
<dbReference type="HAMAP" id="MF_00251">
    <property type="entry name" value="Ribosomal_bL36"/>
    <property type="match status" value="1"/>
</dbReference>
<dbReference type="InterPro" id="IPR000473">
    <property type="entry name" value="Ribosomal_bL36"/>
</dbReference>
<dbReference type="InterPro" id="IPR035977">
    <property type="entry name" value="Ribosomal_bL36_sp"/>
</dbReference>
<dbReference type="NCBIfam" id="TIGR01022">
    <property type="entry name" value="rpmJ_bact"/>
    <property type="match status" value="1"/>
</dbReference>
<dbReference type="PANTHER" id="PTHR42888">
    <property type="entry name" value="50S RIBOSOMAL PROTEIN L36, CHLOROPLASTIC"/>
    <property type="match status" value="1"/>
</dbReference>
<dbReference type="PANTHER" id="PTHR42888:SF1">
    <property type="entry name" value="LARGE RIBOSOMAL SUBUNIT PROTEIN BL36C"/>
    <property type="match status" value="1"/>
</dbReference>
<dbReference type="Pfam" id="PF00444">
    <property type="entry name" value="Ribosomal_L36"/>
    <property type="match status" value="1"/>
</dbReference>
<dbReference type="SUPFAM" id="SSF57840">
    <property type="entry name" value="Ribosomal protein L36"/>
    <property type="match status" value="1"/>
</dbReference>
<dbReference type="PROSITE" id="PS00828">
    <property type="entry name" value="RIBOSOMAL_L36"/>
    <property type="match status" value="1"/>
</dbReference>
<keyword id="KW-0903">Direct protein sequencing</keyword>
<keyword id="KW-0687">Ribonucleoprotein</keyword>
<keyword id="KW-0689">Ribosomal protein</keyword>
<sequence length="37" mass="4361">MKVRPSVKPICEKCKVIRRRGKVMVICENPKHKQRQG</sequence>
<organism>
    <name type="scientific">Geobacillus stearothermophilus</name>
    <name type="common">Bacillus stearothermophilus</name>
    <dbReference type="NCBI Taxonomy" id="1422"/>
    <lineage>
        <taxon>Bacteria</taxon>
        <taxon>Bacillati</taxon>
        <taxon>Bacillota</taxon>
        <taxon>Bacilli</taxon>
        <taxon>Bacillales</taxon>
        <taxon>Anoxybacillaceae</taxon>
        <taxon>Geobacillus</taxon>
    </lineage>
</organism>
<evidence type="ECO:0000305" key="1"/>